<feature type="chain" id="PRO_0000385224" description="Serrate RNA effector molecule homolog">
    <location>
        <begin position="1"/>
        <end position="963"/>
    </location>
</feature>
<feature type="region of interest" description="Disordered" evidence="2">
    <location>
        <begin position="1"/>
        <end position="108"/>
    </location>
</feature>
<feature type="region of interest" description="Disordered" evidence="2">
    <location>
        <begin position="129"/>
        <end position="151"/>
    </location>
</feature>
<feature type="region of interest" description="Disordered" evidence="2">
    <location>
        <begin position="283"/>
        <end position="522"/>
    </location>
</feature>
<feature type="region of interest" description="Disordered" evidence="2">
    <location>
        <begin position="648"/>
        <end position="680"/>
    </location>
</feature>
<feature type="region of interest" description="Disordered" evidence="2">
    <location>
        <begin position="871"/>
        <end position="905"/>
    </location>
</feature>
<feature type="compositionally biased region" description="Basic and acidic residues" evidence="2">
    <location>
        <begin position="8"/>
        <end position="33"/>
    </location>
</feature>
<feature type="compositionally biased region" description="Basic and acidic residues" evidence="2">
    <location>
        <begin position="40"/>
        <end position="49"/>
    </location>
</feature>
<feature type="compositionally biased region" description="Low complexity" evidence="2">
    <location>
        <begin position="73"/>
        <end position="87"/>
    </location>
</feature>
<feature type="compositionally biased region" description="Basic and acidic residues" evidence="2">
    <location>
        <begin position="95"/>
        <end position="106"/>
    </location>
</feature>
<feature type="compositionally biased region" description="Low complexity" evidence="2">
    <location>
        <begin position="129"/>
        <end position="144"/>
    </location>
</feature>
<feature type="compositionally biased region" description="Basic and acidic residues" evidence="2">
    <location>
        <begin position="283"/>
        <end position="294"/>
    </location>
</feature>
<feature type="compositionally biased region" description="Basic and acidic residues" evidence="2">
    <location>
        <begin position="301"/>
        <end position="318"/>
    </location>
</feature>
<feature type="compositionally biased region" description="Acidic residues" evidence="2">
    <location>
        <begin position="337"/>
        <end position="348"/>
    </location>
</feature>
<feature type="compositionally biased region" description="Basic and acidic residues" evidence="2">
    <location>
        <begin position="356"/>
        <end position="368"/>
    </location>
</feature>
<feature type="compositionally biased region" description="Basic residues" evidence="2">
    <location>
        <begin position="369"/>
        <end position="380"/>
    </location>
</feature>
<feature type="compositionally biased region" description="Basic and acidic residues" evidence="2">
    <location>
        <begin position="402"/>
        <end position="429"/>
    </location>
</feature>
<feature type="compositionally biased region" description="Basic and acidic residues" evidence="2">
    <location>
        <begin position="486"/>
        <end position="504"/>
    </location>
</feature>
<feature type="modified residue" description="Phosphotyrosine" evidence="1">
    <location>
        <position position="82"/>
    </location>
</feature>
<feature type="modified residue" description="Phosphoserine" evidence="1">
    <location>
        <position position="84"/>
    </location>
</feature>
<feature type="modified residue" description="Phosphoserine" evidence="1">
    <location>
        <position position="307"/>
    </location>
</feature>
<feature type="modified residue" description="Phosphoserine" evidence="1">
    <location>
        <position position="337"/>
    </location>
</feature>
<feature type="modified residue" description="Phosphoserine" evidence="1">
    <location>
        <position position="361"/>
    </location>
</feature>
<feature type="modified residue" description="Phosphoserine" evidence="1">
    <location>
        <position position="442"/>
    </location>
</feature>
<comment type="function">
    <text evidence="1">Acts as a mediator between the cap-binding complex (CBC) and RNA-mediated gene silencing (RNAi). Involved in innate immunity via the short interfering RNAs (siRNAs) processing machinery by restricting the viral RNA production. Also involved microRNA (miRNA)-mediated silencing by contributing to the stability and delivery of primary miRNA transcripts to the primary miRNA processing complex containing drosha and pasha (By similarity).</text>
</comment>
<comment type="subunit">
    <text evidence="1">Interacts with cbp20, Dcr-2 and pasha.</text>
</comment>
<comment type="subcellular location">
    <subcellularLocation>
        <location evidence="1">Nucleus</location>
    </subcellularLocation>
</comment>
<comment type="similarity">
    <text evidence="3">Belongs to the ARS2 family.</text>
</comment>
<sequence>MADSDDEYDRKRRDKFRGERDSYRPERRDERRPMGGGANSRDEWSERNPFRGSSAAGGGGGGGARHRPDYSDYRGSGPRPRYGSPGREMPPAKRMRPDWGESEMRSNPRFGYDPYLVQAWNDHYQSLHSAYSHSSHPSSARESAPNVVNSDTQTQPAMLTLKQFLDTQDENISDSEVMRKYTEYKTDFKRQQLNEFFVAHKDEEWFKNKYHPEDSVRRSEEQRGFLKRRTDVFLELLENGTIGSVKVDSSQADSLVRVLDTCVIKLEGGTDEDLKILDEKPKETPVVYERKSESTEASVVAKREPESPKQTKSEKGADEEQPVVVSPQRKSLRPVNSDEENWDDENDEMAAPAKVQGDDDSIKSGSDKKLKKKKIKKRNRNSSDDESSSSSSFESDSDSDDEKLKAKYDVEEGLRADQKAEAQKDKEEAATVAKANPLPPDSPQPEGGTALQDAAAIKSEQSDEQQEKDAEQPAELQADEPAAAKNGEEPEKTEKNEVETKSTADDVTETIDLDKVKDGPQPRALHRTSSIFLRNLAPSITKAEIEAICTRFSGYLRVAIADPLVERRWYRRGWITFTRDVNIKEICWSLNNQRLRDCEMGAIVNRDLSRRVRPANGITAHKQIVRADIKLCAKIAMNLDERFKLWSEADSTQQQPDAESKPSADATNGSGGSSTTYGFNSKNPVLQNITDYLIEEASAEEEELLGLAGDNKDGEGEPIERDEQLISVLDRLVLYLRIVHSVDYYNHCEYPYEDEMPNRCGIIHARGPPPMRVTSNDVQEYIKAYDGKLQQFLTKSVQLSDDEIKELGAKNPETEVEKFVQANTQELAKDKWLCPLSGKKFKGPEFIRKHIFNKHEEKVDEVRKEVQYFNNYLRDPKRPQLPEHPGSSKRTESESGRGSGGYRPPMYPPFSAMPYGFAPPMMGGGGRGGRNFPPVRREMPLEHQRRLIGYHDLDAPVNSDMFD</sequence>
<reference key="1">
    <citation type="journal article" date="2007" name="Nature">
        <title>Evolution of genes and genomes on the Drosophila phylogeny.</title>
        <authorList>
            <consortium name="Drosophila 12 genomes consortium"/>
        </authorList>
    </citation>
    <scope>NUCLEOTIDE SEQUENCE [LARGE SCALE GENOMIC DNA]</scope>
    <source>
        <strain>Tucson 15010-1051.87</strain>
    </source>
</reference>
<proteinExistence type="inferred from homology"/>
<gene>
    <name type="primary">Ars2</name>
    <name type="ORF">GJ20888</name>
</gene>
<keyword id="KW-0539">Nucleus</keyword>
<keyword id="KW-0597">Phosphoprotein</keyword>
<keyword id="KW-1185">Reference proteome</keyword>
<keyword id="KW-0943">RNA-mediated gene silencing</keyword>
<accession>B4LIK8</accession>
<dbReference type="EMBL" id="CH940648">
    <property type="protein sequence ID" value="EDW60378.1"/>
    <property type="molecule type" value="Genomic_DNA"/>
</dbReference>
<dbReference type="RefSeq" id="XP_002049185.2">
    <property type="nucleotide sequence ID" value="XM_002049149.2"/>
</dbReference>
<dbReference type="SMR" id="B4LIK8"/>
<dbReference type="FunCoup" id="B4LIK8">
    <property type="interactions" value="2411"/>
</dbReference>
<dbReference type="STRING" id="7244.B4LIK8"/>
<dbReference type="GeneID" id="6624841"/>
<dbReference type="KEGG" id="dvi:6624841"/>
<dbReference type="CTD" id="35539"/>
<dbReference type="eggNOG" id="KOG2295">
    <property type="taxonomic scope" value="Eukaryota"/>
</dbReference>
<dbReference type="HOGENOM" id="CLU_008560_0_0_1"/>
<dbReference type="InParanoid" id="B4LIK8"/>
<dbReference type="OMA" id="GARDEWS"/>
<dbReference type="OrthoDB" id="342064at2759"/>
<dbReference type="PhylomeDB" id="B4LIK8"/>
<dbReference type="Proteomes" id="UP000008792">
    <property type="component" value="Unassembled WGS sequence"/>
</dbReference>
<dbReference type="GO" id="GO:0016604">
    <property type="term" value="C:nuclear body"/>
    <property type="evidence" value="ECO:0007669"/>
    <property type="project" value="TreeGrafter"/>
</dbReference>
<dbReference type="GO" id="GO:0005654">
    <property type="term" value="C:nucleoplasm"/>
    <property type="evidence" value="ECO:0000250"/>
    <property type="project" value="UniProtKB"/>
</dbReference>
<dbReference type="GO" id="GO:0003676">
    <property type="term" value="F:nucleic acid binding"/>
    <property type="evidence" value="ECO:0007669"/>
    <property type="project" value="InterPro"/>
</dbReference>
<dbReference type="GO" id="GO:0031053">
    <property type="term" value="P:primary miRNA processing"/>
    <property type="evidence" value="ECO:0000250"/>
    <property type="project" value="UniProtKB"/>
</dbReference>
<dbReference type="GO" id="GO:0035194">
    <property type="term" value="P:regulatory ncRNA-mediated post-transcriptional gene silencing"/>
    <property type="evidence" value="ECO:0000250"/>
    <property type="project" value="UniProtKB"/>
</dbReference>
<dbReference type="FunFam" id="3.30.70.330:FF:000593">
    <property type="entry name" value="Serrate RNA effector molecule homolog"/>
    <property type="match status" value="1"/>
</dbReference>
<dbReference type="Gene3D" id="3.30.70.330">
    <property type="match status" value="1"/>
</dbReference>
<dbReference type="InterPro" id="IPR012677">
    <property type="entry name" value="Nucleotide-bd_a/b_plait_sf"/>
</dbReference>
<dbReference type="InterPro" id="IPR035979">
    <property type="entry name" value="RBD_domain_sf"/>
</dbReference>
<dbReference type="InterPro" id="IPR039727">
    <property type="entry name" value="SE/Ars2"/>
</dbReference>
<dbReference type="InterPro" id="IPR007042">
    <property type="entry name" value="SERRATE/Ars2_C"/>
</dbReference>
<dbReference type="InterPro" id="IPR021933">
    <property type="entry name" value="SERRATE/Ars2_N"/>
</dbReference>
<dbReference type="PANTHER" id="PTHR13165">
    <property type="entry name" value="ARSENITE-RESISTANCE PROTEIN 2"/>
    <property type="match status" value="1"/>
</dbReference>
<dbReference type="PANTHER" id="PTHR13165:SF0">
    <property type="entry name" value="SERRATE RNA EFFECTOR MOLECULE HOMOLOG"/>
    <property type="match status" value="1"/>
</dbReference>
<dbReference type="Pfam" id="PF04959">
    <property type="entry name" value="ARS2"/>
    <property type="match status" value="1"/>
</dbReference>
<dbReference type="Pfam" id="PF12066">
    <property type="entry name" value="SERRATE_Ars2_N"/>
    <property type="match status" value="1"/>
</dbReference>
<dbReference type="SUPFAM" id="SSF54928">
    <property type="entry name" value="RNA-binding domain, RBD"/>
    <property type="match status" value="1"/>
</dbReference>
<protein>
    <recommendedName>
        <fullName>Serrate RNA effector molecule homolog</fullName>
    </recommendedName>
    <alternativeName>
        <fullName>Arsenite-resistance protein 2 homolog</fullName>
    </alternativeName>
</protein>
<organism>
    <name type="scientific">Drosophila virilis</name>
    <name type="common">Fruit fly</name>
    <dbReference type="NCBI Taxonomy" id="7244"/>
    <lineage>
        <taxon>Eukaryota</taxon>
        <taxon>Metazoa</taxon>
        <taxon>Ecdysozoa</taxon>
        <taxon>Arthropoda</taxon>
        <taxon>Hexapoda</taxon>
        <taxon>Insecta</taxon>
        <taxon>Pterygota</taxon>
        <taxon>Neoptera</taxon>
        <taxon>Endopterygota</taxon>
        <taxon>Diptera</taxon>
        <taxon>Brachycera</taxon>
        <taxon>Muscomorpha</taxon>
        <taxon>Ephydroidea</taxon>
        <taxon>Drosophilidae</taxon>
        <taxon>Drosophila</taxon>
    </lineage>
</organism>
<name>SRRT_DROVI</name>
<evidence type="ECO:0000250" key="1"/>
<evidence type="ECO:0000256" key="2">
    <source>
        <dbReference type="SAM" id="MobiDB-lite"/>
    </source>
</evidence>
<evidence type="ECO:0000305" key="3"/>